<comment type="function">
    <text evidence="1">Produces ATP from ADP in the presence of a proton gradient across the membrane. The gamma chain is believed to be important in regulating ATPase activity and the flow of protons through the CF(0) complex.</text>
</comment>
<comment type="subunit">
    <text evidence="1">F-type ATPases have 2 components, CF(1) - the catalytic core - and CF(0) - the membrane proton channel. CF(1) has five subunits: alpha(3), beta(3), gamma(1), delta(1), epsilon(1). CF(0) has three main subunits: a, b and c.</text>
</comment>
<comment type="subcellular location">
    <subcellularLocation>
        <location evidence="1">Cell inner membrane</location>
        <topology evidence="1">Peripheral membrane protein</topology>
    </subcellularLocation>
</comment>
<comment type="similarity">
    <text evidence="1">Belongs to the ATPase gamma chain family.</text>
</comment>
<keyword id="KW-0066">ATP synthesis</keyword>
<keyword id="KW-0997">Cell inner membrane</keyword>
<keyword id="KW-1003">Cell membrane</keyword>
<keyword id="KW-0139">CF(1)</keyword>
<keyword id="KW-0375">Hydrogen ion transport</keyword>
<keyword id="KW-0406">Ion transport</keyword>
<keyword id="KW-0472">Membrane</keyword>
<keyword id="KW-1185">Reference proteome</keyword>
<keyword id="KW-0813">Transport</keyword>
<evidence type="ECO:0000255" key="1">
    <source>
        <dbReference type="HAMAP-Rule" id="MF_00815"/>
    </source>
</evidence>
<reference key="1">
    <citation type="submission" date="2006-03" db="EMBL/GenBank/DDBJ databases">
        <title>Complete genome sequence of Francisella tularensis LVS (Live Vaccine Strain).</title>
        <authorList>
            <person name="Chain P."/>
            <person name="Larimer F."/>
            <person name="Land M."/>
            <person name="Stilwagen S."/>
            <person name="Larsson P."/>
            <person name="Bearden S."/>
            <person name="Chu M."/>
            <person name="Oyston P."/>
            <person name="Forsman M."/>
            <person name="Andersson S."/>
            <person name="Lindler L."/>
            <person name="Titball R."/>
            <person name="Garcia E."/>
        </authorList>
    </citation>
    <scope>NUCLEOTIDE SEQUENCE [LARGE SCALE GENOMIC DNA]</scope>
    <source>
        <strain>LVS</strain>
    </source>
</reference>
<sequence length="298" mass="33235">MSNAREIRSKVQSVKNTQKITGAMELVAASKMRGAIVKMNNVRPYVESANTIIKNVTAASIDYPNPYLFDRDVKRVGYIVTSTDRGLCGGLNINLFKHVLKEIKNNIEDRVGFDVCVIGSKAENFFAKLKDVNIVATAHYNDKDKEGSIRAIGGAVKVMLDKFTAGEIDRLYMSSNQFVSTIKQRPRLQTLLPIQDIFSAEEIKANKEKATKGHWDYIYERDIEEVLNALCIRYIEAQVRGAILENAACEQAARMMAMKNATDNASDIIDQLKLDYNKVRQAMITQELAEICSGAAAV</sequence>
<accession>Q2A1I1</accession>
<gene>
    <name evidence="1" type="primary">atpG</name>
    <name type="ordered locus">FTL_1796</name>
</gene>
<feature type="chain" id="PRO_1000053214" description="ATP synthase gamma chain">
    <location>
        <begin position="1"/>
        <end position="298"/>
    </location>
</feature>
<protein>
    <recommendedName>
        <fullName evidence="1">ATP synthase gamma chain</fullName>
    </recommendedName>
    <alternativeName>
        <fullName evidence="1">ATP synthase F1 sector gamma subunit</fullName>
    </alternativeName>
    <alternativeName>
        <fullName evidence="1">F-ATPase gamma subunit</fullName>
    </alternativeName>
</protein>
<name>ATPG_FRATH</name>
<dbReference type="EMBL" id="AM233362">
    <property type="protein sequence ID" value="CAJ80235.1"/>
    <property type="molecule type" value="Genomic_DNA"/>
</dbReference>
<dbReference type="RefSeq" id="WP_003017335.1">
    <property type="nucleotide sequence ID" value="NZ_CP009694.1"/>
</dbReference>
<dbReference type="SMR" id="Q2A1I1"/>
<dbReference type="KEGG" id="ftl:FTL_1796"/>
<dbReference type="Proteomes" id="UP000001944">
    <property type="component" value="Chromosome"/>
</dbReference>
<dbReference type="GO" id="GO:0005886">
    <property type="term" value="C:plasma membrane"/>
    <property type="evidence" value="ECO:0007669"/>
    <property type="project" value="UniProtKB-SubCell"/>
</dbReference>
<dbReference type="GO" id="GO:0045259">
    <property type="term" value="C:proton-transporting ATP synthase complex"/>
    <property type="evidence" value="ECO:0007669"/>
    <property type="project" value="UniProtKB-KW"/>
</dbReference>
<dbReference type="GO" id="GO:0005524">
    <property type="term" value="F:ATP binding"/>
    <property type="evidence" value="ECO:0007669"/>
    <property type="project" value="UniProtKB-UniRule"/>
</dbReference>
<dbReference type="GO" id="GO:0046933">
    <property type="term" value="F:proton-transporting ATP synthase activity, rotational mechanism"/>
    <property type="evidence" value="ECO:0007669"/>
    <property type="project" value="UniProtKB-UniRule"/>
</dbReference>
<dbReference type="GO" id="GO:0042777">
    <property type="term" value="P:proton motive force-driven plasma membrane ATP synthesis"/>
    <property type="evidence" value="ECO:0007669"/>
    <property type="project" value="UniProtKB-UniRule"/>
</dbReference>
<dbReference type="CDD" id="cd12151">
    <property type="entry name" value="F1-ATPase_gamma"/>
    <property type="match status" value="1"/>
</dbReference>
<dbReference type="Gene3D" id="3.40.1380.10">
    <property type="match status" value="1"/>
</dbReference>
<dbReference type="Gene3D" id="1.10.287.80">
    <property type="entry name" value="ATP synthase, gamma subunit, helix hairpin domain"/>
    <property type="match status" value="1"/>
</dbReference>
<dbReference type="HAMAP" id="MF_00815">
    <property type="entry name" value="ATP_synth_gamma_bact"/>
    <property type="match status" value="1"/>
</dbReference>
<dbReference type="InterPro" id="IPR035968">
    <property type="entry name" value="ATP_synth_F1_ATPase_gsu"/>
</dbReference>
<dbReference type="InterPro" id="IPR000131">
    <property type="entry name" value="ATP_synth_F1_gsu"/>
</dbReference>
<dbReference type="InterPro" id="IPR023632">
    <property type="entry name" value="ATP_synth_F1_gsu_CS"/>
</dbReference>
<dbReference type="NCBIfam" id="TIGR01146">
    <property type="entry name" value="ATPsyn_F1gamma"/>
    <property type="match status" value="1"/>
</dbReference>
<dbReference type="NCBIfam" id="NF009956">
    <property type="entry name" value="PRK13422.1"/>
    <property type="match status" value="1"/>
</dbReference>
<dbReference type="PANTHER" id="PTHR11693">
    <property type="entry name" value="ATP SYNTHASE GAMMA CHAIN"/>
    <property type="match status" value="1"/>
</dbReference>
<dbReference type="PANTHER" id="PTHR11693:SF22">
    <property type="entry name" value="ATP SYNTHASE SUBUNIT GAMMA, MITOCHONDRIAL"/>
    <property type="match status" value="1"/>
</dbReference>
<dbReference type="Pfam" id="PF00231">
    <property type="entry name" value="ATP-synt"/>
    <property type="match status" value="1"/>
</dbReference>
<dbReference type="PRINTS" id="PR00126">
    <property type="entry name" value="ATPASEGAMMA"/>
</dbReference>
<dbReference type="SUPFAM" id="SSF52943">
    <property type="entry name" value="ATP synthase (F1-ATPase), gamma subunit"/>
    <property type="match status" value="1"/>
</dbReference>
<dbReference type="PROSITE" id="PS00153">
    <property type="entry name" value="ATPASE_GAMMA"/>
    <property type="match status" value="1"/>
</dbReference>
<organism>
    <name type="scientific">Francisella tularensis subsp. holarctica (strain LVS)</name>
    <dbReference type="NCBI Taxonomy" id="376619"/>
    <lineage>
        <taxon>Bacteria</taxon>
        <taxon>Pseudomonadati</taxon>
        <taxon>Pseudomonadota</taxon>
        <taxon>Gammaproteobacteria</taxon>
        <taxon>Thiotrichales</taxon>
        <taxon>Francisellaceae</taxon>
        <taxon>Francisella</taxon>
    </lineage>
</organism>
<proteinExistence type="inferred from homology"/>